<evidence type="ECO:0000250" key="1"/>
<evidence type="ECO:0000255" key="2">
    <source>
        <dbReference type="PROSITE-ProRule" id="PRU10035"/>
    </source>
</evidence>
<evidence type="ECO:0000255" key="3">
    <source>
        <dbReference type="PROSITE-ProRule" id="PRU10036"/>
    </source>
</evidence>
<evidence type="ECO:0000269" key="4">
    <source>
    </source>
</evidence>
<evidence type="ECO:0000305" key="5"/>
<accession>Q6H3C7</accession>
<comment type="function">
    <text evidence="1">PLA2 catalyzes the calcium-dependent hydrolysis of the 2-acyl groups in 3-sn-phosphoglycerides.</text>
</comment>
<comment type="catalytic activity">
    <reaction evidence="2 3">
        <text>a 1,2-diacyl-sn-glycero-3-phosphocholine + H2O = a 1-acyl-sn-glycero-3-phosphocholine + a fatty acid + H(+)</text>
        <dbReference type="Rhea" id="RHEA:15801"/>
        <dbReference type="ChEBI" id="CHEBI:15377"/>
        <dbReference type="ChEBI" id="CHEBI:15378"/>
        <dbReference type="ChEBI" id="CHEBI:28868"/>
        <dbReference type="ChEBI" id="CHEBI:57643"/>
        <dbReference type="ChEBI" id="CHEBI:58168"/>
        <dbReference type="EC" id="3.1.1.4"/>
    </reaction>
</comment>
<comment type="cofactor">
    <cofactor evidence="1">
        <name>Ca(2+)</name>
        <dbReference type="ChEBI" id="CHEBI:29108"/>
    </cofactor>
    <text evidence="1">Binds 1 Ca(2+) ion.</text>
</comment>
<comment type="subcellular location">
    <subcellularLocation>
        <location>Secreted</location>
    </subcellularLocation>
</comment>
<comment type="tissue specificity">
    <text>Expressed by the venom gland.</text>
</comment>
<comment type="mass spectrometry" mass="13905.0" method="Electrospray" evidence="4"/>
<comment type="similarity">
    <text evidence="5">Belongs to the phospholipase A2 family. Group II subfamily. D49 sub-subfamily.</text>
</comment>
<organism>
    <name type="scientific">Trimeresurus stejnegeri</name>
    <name type="common">Chinese green tree viper</name>
    <name type="synonym">Viridovipera stejnegeri</name>
    <dbReference type="NCBI Taxonomy" id="39682"/>
    <lineage>
        <taxon>Eukaryota</taxon>
        <taxon>Metazoa</taxon>
        <taxon>Chordata</taxon>
        <taxon>Craniata</taxon>
        <taxon>Vertebrata</taxon>
        <taxon>Euteleostomi</taxon>
        <taxon>Lepidosauria</taxon>
        <taxon>Squamata</taxon>
        <taxon>Bifurcata</taxon>
        <taxon>Unidentata</taxon>
        <taxon>Episquamata</taxon>
        <taxon>Toxicofera</taxon>
        <taxon>Serpentes</taxon>
        <taxon>Colubroidea</taxon>
        <taxon>Viperidae</taxon>
        <taxon>Crotalinae</taxon>
        <taxon>Trimeresurus</taxon>
    </lineage>
</organism>
<protein>
    <recommendedName>
        <fullName>Acidic phospholipase A2 Ts-A4</fullName>
        <shortName>svPLA2</shortName>
        <ecNumber>3.1.1.4</ecNumber>
    </recommendedName>
    <alternativeName>
        <fullName>Phosphatidylcholine 2-acylhydrolase</fullName>
    </alternativeName>
</protein>
<sequence length="139" mass="15671">MRTLWILAVLLVGVEGHLLQFETMIIKMTKQTGLFSYSFYGCYCGWGGHGRPQDPTDRCCFVHDCCYGKVTNCDPKAAAYSYTIENGGIVCGGDDPCKKQICECDRAAAMCFRDNLDTYNYAKYWKFSAKDCQEESDPC</sequence>
<reference key="1">
    <citation type="journal article" date="2004" name="Biochem. J.">
        <title>Venom phospholipases A2 of bamboo viper (Trimeresurus stejnegeri): molecular characterization, geographic variations and evidence of multiple ancestries.</title>
        <authorList>
            <person name="Tsai I.-H."/>
            <person name="Wang Y.-M."/>
            <person name="Chen Y.-H."/>
            <person name="Tsai T.-S."/>
            <person name="Tu M.-C."/>
        </authorList>
    </citation>
    <scope>NUCLEOTIDE SEQUENCE [MRNA]</scope>
    <scope>PROTEIN SEQUENCE OF 17-39</scope>
    <scope>MASS SPECTROMETRY</scope>
    <source>
        <strain>Taiwan</strain>
        <tissue>Venom</tissue>
        <tissue>Venom gland</tissue>
    </source>
</reference>
<dbReference type="EC" id="3.1.1.4"/>
<dbReference type="EMBL" id="AY211942">
    <property type="protein sequence ID" value="AAP48900.1"/>
    <property type="molecule type" value="mRNA"/>
</dbReference>
<dbReference type="SMR" id="Q6H3C7"/>
<dbReference type="GO" id="GO:0005576">
    <property type="term" value="C:extracellular region"/>
    <property type="evidence" value="ECO:0007669"/>
    <property type="project" value="UniProtKB-SubCell"/>
</dbReference>
<dbReference type="GO" id="GO:0005509">
    <property type="term" value="F:calcium ion binding"/>
    <property type="evidence" value="ECO:0007669"/>
    <property type="project" value="InterPro"/>
</dbReference>
<dbReference type="GO" id="GO:0047498">
    <property type="term" value="F:calcium-dependent phospholipase A2 activity"/>
    <property type="evidence" value="ECO:0007669"/>
    <property type="project" value="TreeGrafter"/>
</dbReference>
<dbReference type="GO" id="GO:0005543">
    <property type="term" value="F:phospholipid binding"/>
    <property type="evidence" value="ECO:0007669"/>
    <property type="project" value="TreeGrafter"/>
</dbReference>
<dbReference type="GO" id="GO:0090729">
    <property type="term" value="F:toxin activity"/>
    <property type="evidence" value="ECO:0007669"/>
    <property type="project" value="UniProtKB-KW"/>
</dbReference>
<dbReference type="GO" id="GO:0050482">
    <property type="term" value="P:arachidonate secretion"/>
    <property type="evidence" value="ECO:0007669"/>
    <property type="project" value="InterPro"/>
</dbReference>
<dbReference type="GO" id="GO:0016042">
    <property type="term" value="P:lipid catabolic process"/>
    <property type="evidence" value="ECO:0007669"/>
    <property type="project" value="UniProtKB-KW"/>
</dbReference>
<dbReference type="GO" id="GO:0042130">
    <property type="term" value="P:negative regulation of T cell proliferation"/>
    <property type="evidence" value="ECO:0007669"/>
    <property type="project" value="TreeGrafter"/>
</dbReference>
<dbReference type="GO" id="GO:0006644">
    <property type="term" value="P:phospholipid metabolic process"/>
    <property type="evidence" value="ECO:0007669"/>
    <property type="project" value="InterPro"/>
</dbReference>
<dbReference type="CDD" id="cd00125">
    <property type="entry name" value="PLA2c"/>
    <property type="match status" value="1"/>
</dbReference>
<dbReference type="FunFam" id="1.20.90.10:FF:000001">
    <property type="entry name" value="Basic phospholipase A2 homolog"/>
    <property type="match status" value="1"/>
</dbReference>
<dbReference type="Gene3D" id="1.20.90.10">
    <property type="entry name" value="Phospholipase A2 domain"/>
    <property type="match status" value="1"/>
</dbReference>
<dbReference type="InterPro" id="IPR001211">
    <property type="entry name" value="PLipase_A2"/>
</dbReference>
<dbReference type="InterPro" id="IPR033112">
    <property type="entry name" value="PLipase_A2_Asp_AS"/>
</dbReference>
<dbReference type="InterPro" id="IPR016090">
    <property type="entry name" value="PLipase_A2_dom"/>
</dbReference>
<dbReference type="InterPro" id="IPR036444">
    <property type="entry name" value="PLipase_A2_dom_sf"/>
</dbReference>
<dbReference type="InterPro" id="IPR033113">
    <property type="entry name" value="PLipase_A2_His_AS"/>
</dbReference>
<dbReference type="PANTHER" id="PTHR11716">
    <property type="entry name" value="PHOSPHOLIPASE A2 FAMILY MEMBER"/>
    <property type="match status" value="1"/>
</dbReference>
<dbReference type="PANTHER" id="PTHR11716:SF9">
    <property type="entry name" value="PHOSPHOLIPASE A2, MEMBRANE ASSOCIATED"/>
    <property type="match status" value="1"/>
</dbReference>
<dbReference type="Pfam" id="PF00068">
    <property type="entry name" value="Phospholip_A2_1"/>
    <property type="match status" value="1"/>
</dbReference>
<dbReference type="PRINTS" id="PR00389">
    <property type="entry name" value="PHPHLIPASEA2"/>
</dbReference>
<dbReference type="SMART" id="SM00085">
    <property type="entry name" value="PA2c"/>
    <property type="match status" value="1"/>
</dbReference>
<dbReference type="SUPFAM" id="SSF48619">
    <property type="entry name" value="Phospholipase A2, PLA2"/>
    <property type="match status" value="1"/>
</dbReference>
<dbReference type="PROSITE" id="PS00119">
    <property type="entry name" value="PA2_ASP"/>
    <property type="match status" value="1"/>
</dbReference>
<dbReference type="PROSITE" id="PS00118">
    <property type="entry name" value="PA2_HIS"/>
    <property type="match status" value="1"/>
</dbReference>
<feature type="signal peptide" evidence="4">
    <location>
        <begin position="1"/>
        <end position="16"/>
    </location>
</feature>
<feature type="chain" id="PRO_0000419068" description="Acidic phospholipase A2 Ts-A4">
    <location>
        <begin position="17"/>
        <end position="139"/>
    </location>
</feature>
<feature type="active site" evidence="1">
    <location>
        <position position="63"/>
    </location>
</feature>
<feature type="active site" evidence="1">
    <location>
        <position position="105"/>
    </location>
</feature>
<feature type="binding site" evidence="1">
    <location>
        <position position="43"/>
    </location>
    <ligand>
        <name>Ca(2+)</name>
        <dbReference type="ChEBI" id="CHEBI:29108"/>
    </ligand>
</feature>
<feature type="binding site" evidence="1">
    <location>
        <position position="45"/>
    </location>
    <ligand>
        <name>Ca(2+)</name>
        <dbReference type="ChEBI" id="CHEBI:29108"/>
    </ligand>
</feature>
<feature type="binding site" evidence="1">
    <location>
        <position position="47"/>
    </location>
    <ligand>
        <name>Ca(2+)</name>
        <dbReference type="ChEBI" id="CHEBI:29108"/>
    </ligand>
</feature>
<feature type="binding site" evidence="1">
    <location>
        <position position="64"/>
    </location>
    <ligand>
        <name>Ca(2+)</name>
        <dbReference type="ChEBI" id="CHEBI:29108"/>
    </ligand>
</feature>
<feature type="disulfide bond" evidence="1">
    <location>
        <begin position="42"/>
        <end position="132"/>
    </location>
</feature>
<feature type="disulfide bond" evidence="1">
    <location>
        <begin position="44"/>
        <end position="60"/>
    </location>
</feature>
<feature type="disulfide bond" evidence="1">
    <location>
        <begin position="59"/>
        <end position="111"/>
    </location>
</feature>
<feature type="disulfide bond" evidence="1">
    <location>
        <begin position="65"/>
        <end position="139"/>
    </location>
</feature>
<feature type="disulfide bond" evidence="1">
    <location>
        <begin position="66"/>
        <end position="104"/>
    </location>
</feature>
<feature type="disulfide bond" evidence="1">
    <location>
        <begin position="73"/>
        <end position="97"/>
    </location>
</feature>
<feature type="disulfide bond" evidence="1">
    <location>
        <begin position="91"/>
        <end position="102"/>
    </location>
</feature>
<proteinExistence type="evidence at protein level"/>
<name>PA2AD_TRIST</name>
<keyword id="KW-0106">Calcium</keyword>
<keyword id="KW-0903">Direct protein sequencing</keyword>
<keyword id="KW-1015">Disulfide bond</keyword>
<keyword id="KW-0378">Hydrolase</keyword>
<keyword id="KW-0442">Lipid degradation</keyword>
<keyword id="KW-0443">Lipid metabolism</keyword>
<keyword id="KW-0479">Metal-binding</keyword>
<keyword id="KW-0964">Secreted</keyword>
<keyword id="KW-0732">Signal</keyword>
<keyword id="KW-0800">Toxin</keyword>